<keyword id="KW-0093">Biotin biosynthesis</keyword>
<keyword id="KW-0663">Pyridoxal phosphate</keyword>
<keyword id="KW-0808">Transferase</keyword>
<sequence length="394" mass="40993">MSLLDTLQRGLADLDAQGLRRVRRIADTACDARMTVNGREIVGFASNDYLGLAAHPALVAAFAEGAQRYGSGSGGSHLLGGHSRAHARLEDELAGFAGGFSDAPRALYFSTGYMANLAAMTALAGKGATIFSDALNHASLIDGMRLSRANVQVYPHADTAALAALLDASEAETKLIVSDTVFSMDGDVAPLAELVALAERHGAWLVVDDAHGFGVLGPQGRGALAAAALRSPHLVYVGTLGKAAGVAGAFVIAHETVIEWLIQRARSYIFTTAAPPAVAHAVSASLKVIAGDEGDARRAHLAALIERTRALLRNTRWQPVDSHTAVQPLVIGSNDATLAAMRALDAHGLWVPAIRPPTVPAGTSRLRVSLSAAHSFDDFARLEAALIEASEAAA</sequence>
<reference key="1">
    <citation type="journal article" date="2009" name="J. Bacteriol.">
        <title>The genome of Burkholderia cenocepacia J2315, an epidemic pathogen of cystic fibrosis patients.</title>
        <authorList>
            <person name="Holden M.T."/>
            <person name="Seth-Smith H.M."/>
            <person name="Crossman L.C."/>
            <person name="Sebaihia M."/>
            <person name="Bentley S.D."/>
            <person name="Cerdeno-Tarraga A.M."/>
            <person name="Thomson N.R."/>
            <person name="Bason N."/>
            <person name="Quail M.A."/>
            <person name="Sharp S."/>
            <person name="Cherevach I."/>
            <person name="Churcher C."/>
            <person name="Goodhead I."/>
            <person name="Hauser H."/>
            <person name="Holroyd N."/>
            <person name="Mungall K."/>
            <person name="Scott P."/>
            <person name="Walker D."/>
            <person name="White B."/>
            <person name="Rose H."/>
            <person name="Iversen P."/>
            <person name="Mil-Homens D."/>
            <person name="Rocha E.P."/>
            <person name="Fialho A.M."/>
            <person name="Baldwin A."/>
            <person name="Dowson C."/>
            <person name="Barrell B.G."/>
            <person name="Govan J.R."/>
            <person name="Vandamme P."/>
            <person name="Hart C.A."/>
            <person name="Mahenthiralingam E."/>
            <person name="Parkhill J."/>
        </authorList>
    </citation>
    <scope>NUCLEOTIDE SEQUENCE [LARGE SCALE GENOMIC DNA]</scope>
    <source>
        <strain>ATCC BAA-245 / DSM 16553 / LMG 16656 / NCTC 13227 / J2315 / CF5610</strain>
    </source>
</reference>
<proteinExistence type="inferred from homology"/>
<organism>
    <name type="scientific">Burkholderia cenocepacia (strain ATCC BAA-245 / DSM 16553 / LMG 16656 / NCTC 13227 / J2315 / CF5610)</name>
    <name type="common">Burkholderia cepacia (strain J2315)</name>
    <dbReference type="NCBI Taxonomy" id="216591"/>
    <lineage>
        <taxon>Bacteria</taxon>
        <taxon>Pseudomonadati</taxon>
        <taxon>Pseudomonadota</taxon>
        <taxon>Betaproteobacteria</taxon>
        <taxon>Burkholderiales</taxon>
        <taxon>Burkholderiaceae</taxon>
        <taxon>Burkholderia</taxon>
        <taxon>Burkholderia cepacia complex</taxon>
    </lineage>
</organism>
<evidence type="ECO:0000255" key="1">
    <source>
        <dbReference type="HAMAP-Rule" id="MF_01693"/>
    </source>
</evidence>
<protein>
    <recommendedName>
        <fullName evidence="1">8-amino-7-oxononanoate synthase</fullName>
        <shortName evidence="1">AONS</shortName>
        <ecNumber evidence="1">2.3.1.47</ecNumber>
    </recommendedName>
    <alternativeName>
        <fullName evidence="1">7-keto-8-amino-pelargonic acid synthase</fullName>
        <shortName evidence="1">7-KAP synthase</shortName>
        <shortName evidence="1">KAPA synthase</shortName>
    </alternativeName>
    <alternativeName>
        <fullName evidence="1">8-amino-7-ketopelargonate synthase</fullName>
    </alternativeName>
</protein>
<gene>
    <name evidence="1" type="primary">bioF</name>
    <name type="ordered locus">BceJ2315_06600</name>
    <name type="ORF">BCAL0666</name>
</gene>
<name>BIOF_BURCJ</name>
<dbReference type="EC" id="2.3.1.47" evidence="1"/>
<dbReference type="EMBL" id="AM747720">
    <property type="protein sequence ID" value="CAR50975.1"/>
    <property type="molecule type" value="Genomic_DNA"/>
</dbReference>
<dbReference type="RefSeq" id="WP_006483473.1">
    <property type="nucleotide sequence ID" value="NC_011000.1"/>
</dbReference>
<dbReference type="SMR" id="B4E9L6"/>
<dbReference type="KEGG" id="bcj:BCAL0666"/>
<dbReference type="eggNOG" id="COG0156">
    <property type="taxonomic scope" value="Bacteria"/>
</dbReference>
<dbReference type="HOGENOM" id="CLU_015846_11_2_4"/>
<dbReference type="BioCyc" id="BCEN216591:G1G1V-754-MONOMER"/>
<dbReference type="UniPathway" id="UPA00078"/>
<dbReference type="Proteomes" id="UP000001035">
    <property type="component" value="Chromosome 1"/>
</dbReference>
<dbReference type="GO" id="GO:0008710">
    <property type="term" value="F:8-amino-7-oxononanoate synthase activity"/>
    <property type="evidence" value="ECO:0007669"/>
    <property type="project" value="UniProtKB-UniRule"/>
</dbReference>
<dbReference type="GO" id="GO:0030170">
    <property type="term" value="F:pyridoxal phosphate binding"/>
    <property type="evidence" value="ECO:0007669"/>
    <property type="project" value="UniProtKB-UniRule"/>
</dbReference>
<dbReference type="GO" id="GO:0009102">
    <property type="term" value="P:biotin biosynthetic process"/>
    <property type="evidence" value="ECO:0007669"/>
    <property type="project" value="UniProtKB-UniRule"/>
</dbReference>
<dbReference type="Gene3D" id="3.90.1150.10">
    <property type="entry name" value="Aspartate Aminotransferase, domain 1"/>
    <property type="match status" value="1"/>
</dbReference>
<dbReference type="Gene3D" id="3.40.640.10">
    <property type="entry name" value="Type I PLP-dependent aspartate aminotransferase-like (Major domain)"/>
    <property type="match status" value="1"/>
</dbReference>
<dbReference type="HAMAP" id="MF_01693">
    <property type="entry name" value="BioF_aminotrans_2"/>
    <property type="match status" value="1"/>
</dbReference>
<dbReference type="InterPro" id="IPR004839">
    <property type="entry name" value="Aminotransferase_I/II_large"/>
</dbReference>
<dbReference type="InterPro" id="IPR050087">
    <property type="entry name" value="AON_synthase_class-II"/>
</dbReference>
<dbReference type="InterPro" id="IPR004723">
    <property type="entry name" value="AONS_Archaea/Proteobacteria"/>
</dbReference>
<dbReference type="InterPro" id="IPR022834">
    <property type="entry name" value="AONS_Proteobacteria"/>
</dbReference>
<dbReference type="InterPro" id="IPR015424">
    <property type="entry name" value="PyrdxlP-dep_Trfase"/>
</dbReference>
<dbReference type="InterPro" id="IPR015421">
    <property type="entry name" value="PyrdxlP-dep_Trfase_major"/>
</dbReference>
<dbReference type="InterPro" id="IPR015422">
    <property type="entry name" value="PyrdxlP-dep_Trfase_small"/>
</dbReference>
<dbReference type="NCBIfam" id="TIGR00858">
    <property type="entry name" value="bioF"/>
    <property type="match status" value="1"/>
</dbReference>
<dbReference type="PANTHER" id="PTHR13693:SF100">
    <property type="entry name" value="8-AMINO-7-OXONONANOATE SYNTHASE"/>
    <property type="match status" value="1"/>
</dbReference>
<dbReference type="PANTHER" id="PTHR13693">
    <property type="entry name" value="CLASS II AMINOTRANSFERASE/8-AMINO-7-OXONONANOATE SYNTHASE"/>
    <property type="match status" value="1"/>
</dbReference>
<dbReference type="Pfam" id="PF00155">
    <property type="entry name" value="Aminotran_1_2"/>
    <property type="match status" value="1"/>
</dbReference>
<dbReference type="SUPFAM" id="SSF53383">
    <property type="entry name" value="PLP-dependent transferases"/>
    <property type="match status" value="1"/>
</dbReference>
<accession>B4E9L6</accession>
<feature type="chain" id="PRO_0000380931" description="8-amino-7-oxononanoate synthase">
    <location>
        <begin position="1"/>
        <end position="394"/>
    </location>
</feature>
<feature type="binding site" evidence="1">
    <location>
        <position position="21"/>
    </location>
    <ligand>
        <name>substrate</name>
    </ligand>
</feature>
<feature type="binding site" evidence="1">
    <location>
        <begin position="112"/>
        <end position="113"/>
    </location>
    <ligand>
        <name>pyridoxal 5'-phosphate</name>
        <dbReference type="ChEBI" id="CHEBI:597326"/>
    </ligand>
</feature>
<feature type="binding site" evidence="1">
    <location>
        <position position="137"/>
    </location>
    <ligand>
        <name>substrate</name>
    </ligand>
</feature>
<feature type="binding site" evidence="1">
    <location>
        <position position="183"/>
    </location>
    <ligand>
        <name>pyridoxal 5'-phosphate</name>
        <dbReference type="ChEBI" id="CHEBI:597326"/>
    </ligand>
</feature>
<feature type="binding site" evidence="1">
    <location>
        <position position="211"/>
    </location>
    <ligand>
        <name>pyridoxal 5'-phosphate</name>
        <dbReference type="ChEBI" id="CHEBI:597326"/>
    </ligand>
</feature>
<feature type="binding site" evidence="1">
    <location>
        <position position="239"/>
    </location>
    <ligand>
        <name>pyridoxal 5'-phosphate</name>
        <dbReference type="ChEBI" id="CHEBI:597326"/>
    </ligand>
</feature>
<feature type="binding site" evidence="1">
    <location>
        <position position="358"/>
    </location>
    <ligand>
        <name>substrate</name>
    </ligand>
</feature>
<feature type="modified residue" description="N6-(pyridoxal phosphate)lysine" evidence="1">
    <location>
        <position position="242"/>
    </location>
</feature>
<comment type="function">
    <text evidence="1">Catalyzes the decarboxylative condensation of pimeloyl-[acyl-carrier protein] and L-alanine to produce 8-amino-7-oxononanoate (AON), [acyl-carrier protein], and carbon dioxide.</text>
</comment>
<comment type="catalytic activity">
    <reaction evidence="1">
        <text>6-carboxyhexanoyl-[ACP] + L-alanine + H(+) = (8S)-8-amino-7-oxononanoate + holo-[ACP] + CO2</text>
        <dbReference type="Rhea" id="RHEA:42288"/>
        <dbReference type="Rhea" id="RHEA-COMP:9685"/>
        <dbReference type="Rhea" id="RHEA-COMP:9955"/>
        <dbReference type="ChEBI" id="CHEBI:15378"/>
        <dbReference type="ChEBI" id="CHEBI:16526"/>
        <dbReference type="ChEBI" id="CHEBI:57972"/>
        <dbReference type="ChEBI" id="CHEBI:64479"/>
        <dbReference type="ChEBI" id="CHEBI:78846"/>
        <dbReference type="ChEBI" id="CHEBI:149468"/>
        <dbReference type="EC" id="2.3.1.47"/>
    </reaction>
</comment>
<comment type="cofactor">
    <cofactor evidence="1">
        <name>pyridoxal 5'-phosphate</name>
        <dbReference type="ChEBI" id="CHEBI:597326"/>
    </cofactor>
</comment>
<comment type="pathway">
    <text evidence="1">Cofactor biosynthesis; biotin biosynthesis.</text>
</comment>
<comment type="subunit">
    <text evidence="1">Homodimer.</text>
</comment>
<comment type="similarity">
    <text evidence="1">Belongs to the class-II pyridoxal-phosphate-dependent aminotransferase family. BioF subfamily.</text>
</comment>